<organism>
    <name type="scientific">Clostridium butyricum</name>
    <dbReference type="NCBI Taxonomy" id="1492"/>
    <lineage>
        <taxon>Bacteria</taxon>
        <taxon>Bacillati</taxon>
        <taxon>Bacillota</taxon>
        <taxon>Clostridia</taxon>
        <taxon>Eubacteriales</taxon>
        <taxon>Clostridiaceae</taxon>
        <taxon>Clostridium</taxon>
    </lineage>
</organism>
<proteinExistence type="predicted"/>
<sequence>MNIKDIARLSGVGVSTVSRVINNHPDVKQSTREKVLQIIKDSNYIPNNSARILKQNNTKNIGVLVKGVFNPFFSEMTNIIGNIIEENGYTMILQQNDFNLYQDVETMIGFVKEKRLQGVICLGGNFTEIQEDSFEDIKVPVVLTSVNTISKKGKKYYSSVGIDNSKSAYKAVRYLIERVIKDCFGLGEVNDLGVSWWRLDGYKKALGENNIDIDDELIISGEYNSGTAYENVNKLLKKRKDITAIFALSDIMALGAIKAAIDNGLDVPRDISIVGFDGMDESKYYNPSITTVKQPKKKMAETSVELLFSLITTDGENKHVILDTELVERDSCFNI</sequence>
<feature type="chain" id="PRO_0000107968" description="HTH-type transcriptional regulator MalR">
    <location>
        <begin position="1"/>
        <end position="335"/>
    </location>
</feature>
<feature type="domain" description="HTH lacI-type" evidence="1">
    <location>
        <begin position="1"/>
        <end position="55"/>
    </location>
</feature>
<feature type="DNA-binding region" description="H-T-H motif" evidence="1">
    <location>
        <begin position="3"/>
        <end position="22"/>
    </location>
</feature>
<name>MALR_CLOBU</name>
<comment type="function">
    <text>Repressor of glucanotransferase gene expression.</text>
</comment>
<keyword id="KW-0238">DNA-binding</keyword>
<keyword id="KW-0678">Repressor</keyword>
<keyword id="KW-0804">Transcription</keyword>
<keyword id="KW-0805">Transcription regulation</keyword>
<dbReference type="EMBL" id="Y10554">
    <property type="protein sequence ID" value="CAA71586.1"/>
    <property type="molecule type" value="Genomic_DNA"/>
</dbReference>
<dbReference type="SMR" id="O05103"/>
<dbReference type="GO" id="GO:0003700">
    <property type="term" value="F:DNA-binding transcription factor activity"/>
    <property type="evidence" value="ECO:0007669"/>
    <property type="project" value="TreeGrafter"/>
</dbReference>
<dbReference type="GO" id="GO:0000976">
    <property type="term" value="F:transcription cis-regulatory region binding"/>
    <property type="evidence" value="ECO:0007669"/>
    <property type="project" value="TreeGrafter"/>
</dbReference>
<dbReference type="CDD" id="cd01392">
    <property type="entry name" value="HTH_LacI"/>
    <property type="match status" value="1"/>
</dbReference>
<dbReference type="CDD" id="cd06267">
    <property type="entry name" value="PBP1_LacI_sugar_binding-like"/>
    <property type="match status" value="1"/>
</dbReference>
<dbReference type="Gene3D" id="3.40.50.2300">
    <property type="match status" value="2"/>
</dbReference>
<dbReference type="Gene3D" id="1.10.260.40">
    <property type="entry name" value="lambda repressor-like DNA-binding domains"/>
    <property type="match status" value="1"/>
</dbReference>
<dbReference type="InterPro" id="IPR000843">
    <property type="entry name" value="HTH_LacI"/>
</dbReference>
<dbReference type="InterPro" id="IPR046335">
    <property type="entry name" value="LacI/GalR-like_sensor"/>
</dbReference>
<dbReference type="InterPro" id="IPR010982">
    <property type="entry name" value="Lambda_DNA-bd_dom_sf"/>
</dbReference>
<dbReference type="InterPro" id="IPR028082">
    <property type="entry name" value="Peripla_BP_I"/>
</dbReference>
<dbReference type="PANTHER" id="PTHR30146:SF149">
    <property type="entry name" value="HTH-TYPE TRANSCRIPTIONAL REGULATOR EBGR"/>
    <property type="match status" value="1"/>
</dbReference>
<dbReference type="PANTHER" id="PTHR30146">
    <property type="entry name" value="LACI-RELATED TRANSCRIPTIONAL REPRESSOR"/>
    <property type="match status" value="1"/>
</dbReference>
<dbReference type="Pfam" id="PF00356">
    <property type="entry name" value="LacI"/>
    <property type="match status" value="1"/>
</dbReference>
<dbReference type="Pfam" id="PF13377">
    <property type="entry name" value="Peripla_BP_3"/>
    <property type="match status" value="1"/>
</dbReference>
<dbReference type="PRINTS" id="PR00036">
    <property type="entry name" value="HTHLACI"/>
</dbReference>
<dbReference type="SMART" id="SM00354">
    <property type="entry name" value="HTH_LACI"/>
    <property type="match status" value="1"/>
</dbReference>
<dbReference type="SUPFAM" id="SSF47413">
    <property type="entry name" value="lambda repressor-like DNA-binding domains"/>
    <property type="match status" value="1"/>
</dbReference>
<dbReference type="SUPFAM" id="SSF53822">
    <property type="entry name" value="Periplasmic binding protein-like I"/>
    <property type="match status" value="1"/>
</dbReference>
<dbReference type="PROSITE" id="PS00356">
    <property type="entry name" value="HTH_LACI_1"/>
    <property type="match status" value="1"/>
</dbReference>
<dbReference type="PROSITE" id="PS50932">
    <property type="entry name" value="HTH_LACI_2"/>
    <property type="match status" value="1"/>
</dbReference>
<accession>O05103</accession>
<reference key="1">
    <citation type="submission" date="1997-03" db="EMBL/GenBank/DDBJ databases">
        <authorList>
            <person name="Goda S.K."/>
            <person name="Minton N.P."/>
        </authorList>
    </citation>
    <scope>NUCLEOTIDE SEQUENCE [GENOMIC DNA]</scope>
    <source>
        <strain>ATCC 19398 / DSM 10702 / JCM 1391 / NCIMB 7423</strain>
    </source>
</reference>
<protein>
    <recommendedName>
        <fullName>HTH-type transcriptional regulator MalR</fullName>
    </recommendedName>
</protein>
<evidence type="ECO:0000255" key="1">
    <source>
        <dbReference type="PROSITE-ProRule" id="PRU00111"/>
    </source>
</evidence>